<protein>
    <recommendedName>
        <fullName>Delta-aminolevulinic acid dehydratase</fullName>
        <shortName>ALAD</shortName>
        <shortName>ALADH</shortName>
        <ecNumber>4.2.1.24</ecNumber>
    </recommendedName>
    <alternativeName>
        <fullName>Porphobilinogen synthase</fullName>
    </alternativeName>
</protein>
<proteinExistence type="inferred from homology"/>
<dbReference type="EC" id="4.2.1.24"/>
<dbReference type="EMBL" id="AE015929">
    <property type="protein sequence ID" value="AAO04942.1"/>
    <property type="molecule type" value="Genomic_DNA"/>
</dbReference>
<dbReference type="RefSeq" id="NP_764898.1">
    <property type="nucleotide sequence ID" value="NC_004461.1"/>
</dbReference>
<dbReference type="RefSeq" id="WP_002440176.1">
    <property type="nucleotide sequence ID" value="NZ_WBME01000016.1"/>
</dbReference>
<dbReference type="SMR" id="Q8CNZ0"/>
<dbReference type="GeneID" id="50018542"/>
<dbReference type="KEGG" id="sep:SE_1343"/>
<dbReference type="PATRIC" id="fig|176280.10.peg.1312"/>
<dbReference type="eggNOG" id="COG0113">
    <property type="taxonomic scope" value="Bacteria"/>
</dbReference>
<dbReference type="HOGENOM" id="CLU_035731_0_0_9"/>
<dbReference type="OrthoDB" id="9805001at2"/>
<dbReference type="UniPathway" id="UPA00251">
    <property type="reaction ID" value="UER00318"/>
</dbReference>
<dbReference type="Proteomes" id="UP000001411">
    <property type="component" value="Chromosome"/>
</dbReference>
<dbReference type="GO" id="GO:0005829">
    <property type="term" value="C:cytosol"/>
    <property type="evidence" value="ECO:0007669"/>
    <property type="project" value="TreeGrafter"/>
</dbReference>
<dbReference type="GO" id="GO:0004655">
    <property type="term" value="F:porphobilinogen synthase activity"/>
    <property type="evidence" value="ECO:0007669"/>
    <property type="project" value="UniProtKB-EC"/>
</dbReference>
<dbReference type="GO" id="GO:0008270">
    <property type="term" value="F:zinc ion binding"/>
    <property type="evidence" value="ECO:0007669"/>
    <property type="project" value="TreeGrafter"/>
</dbReference>
<dbReference type="GO" id="GO:0006782">
    <property type="term" value="P:protoporphyrinogen IX biosynthetic process"/>
    <property type="evidence" value="ECO:0007669"/>
    <property type="project" value="UniProtKB-UniPathway"/>
</dbReference>
<dbReference type="CDD" id="cd00384">
    <property type="entry name" value="ALAD_PBGS"/>
    <property type="match status" value="1"/>
</dbReference>
<dbReference type="FunFam" id="3.20.20.70:FF:000019">
    <property type="entry name" value="Delta-aminolevulinic acid dehydratase"/>
    <property type="match status" value="1"/>
</dbReference>
<dbReference type="Gene3D" id="3.20.20.70">
    <property type="entry name" value="Aldolase class I"/>
    <property type="match status" value="1"/>
</dbReference>
<dbReference type="InterPro" id="IPR001731">
    <property type="entry name" value="ALAD"/>
</dbReference>
<dbReference type="InterPro" id="IPR030656">
    <property type="entry name" value="ALAD_AS"/>
</dbReference>
<dbReference type="InterPro" id="IPR013785">
    <property type="entry name" value="Aldolase_TIM"/>
</dbReference>
<dbReference type="NCBIfam" id="NF006762">
    <property type="entry name" value="PRK09283.1"/>
    <property type="match status" value="1"/>
</dbReference>
<dbReference type="PANTHER" id="PTHR11458">
    <property type="entry name" value="DELTA-AMINOLEVULINIC ACID DEHYDRATASE"/>
    <property type="match status" value="1"/>
</dbReference>
<dbReference type="PANTHER" id="PTHR11458:SF0">
    <property type="entry name" value="DELTA-AMINOLEVULINIC ACID DEHYDRATASE"/>
    <property type="match status" value="1"/>
</dbReference>
<dbReference type="Pfam" id="PF00490">
    <property type="entry name" value="ALAD"/>
    <property type="match status" value="1"/>
</dbReference>
<dbReference type="PIRSF" id="PIRSF001415">
    <property type="entry name" value="Porphbilin_synth"/>
    <property type="match status" value="1"/>
</dbReference>
<dbReference type="PRINTS" id="PR00144">
    <property type="entry name" value="DALDHYDRTASE"/>
</dbReference>
<dbReference type="SMART" id="SM01004">
    <property type="entry name" value="ALAD"/>
    <property type="match status" value="1"/>
</dbReference>
<dbReference type="SUPFAM" id="SSF51569">
    <property type="entry name" value="Aldolase"/>
    <property type="match status" value="1"/>
</dbReference>
<dbReference type="PROSITE" id="PS00169">
    <property type="entry name" value="D_ALA_DEHYDRATASE"/>
    <property type="match status" value="1"/>
</dbReference>
<feature type="chain" id="PRO_0000140517" description="Delta-aminolevulinic acid dehydratase">
    <location>
        <begin position="1"/>
        <end position="324"/>
    </location>
</feature>
<feature type="active site" description="Schiff-base intermediate with substrate" evidence="1">
    <location>
        <position position="195"/>
    </location>
</feature>
<feature type="active site" description="Schiff-base intermediate with substrate" evidence="1">
    <location>
        <position position="248"/>
    </location>
</feature>
<feature type="binding site" evidence="1">
    <location>
        <position position="118"/>
    </location>
    <ligand>
        <name>Zn(2+)</name>
        <dbReference type="ChEBI" id="CHEBI:29105"/>
        <note>catalytic</note>
    </ligand>
</feature>
<feature type="binding site" evidence="1">
    <location>
        <position position="120"/>
    </location>
    <ligand>
        <name>Zn(2+)</name>
        <dbReference type="ChEBI" id="CHEBI:29105"/>
        <note>catalytic</note>
    </ligand>
</feature>
<feature type="binding site" evidence="1">
    <location>
        <position position="128"/>
    </location>
    <ligand>
        <name>Zn(2+)</name>
        <dbReference type="ChEBI" id="CHEBI:29105"/>
        <note>catalytic</note>
    </ligand>
</feature>
<feature type="binding site" evidence="1">
    <location>
        <position position="205"/>
    </location>
    <ligand>
        <name>5-aminolevulinate</name>
        <dbReference type="ChEBI" id="CHEBI:356416"/>
        <label>1</label>
    </ligand>
</feature>
<feature type="binding site" evidence="1">
    <location>
        <position position="217"/>
    </location>
    <ligand>
        <name>5-aminolevulinate</name>
        <dbReference type="ChEBI" id="CHEBI:356416"/>
        <label>1</label>
    </ligand>
</feature>
<feature type="binding site" evidence="1">
    <location>
        <position position="233"/>
    </location>
    <ligand>
        <name>Mg(2+)</name>
        <dbReference type="ChEBI" id="CHEBI:18420"/>
    </ligand>
</feature>
<feature type="binding site" evidence="1">
    <location>
        <position position="274"/>
    </location>
    <ligand>
        <name>5-aminolevulinate</name>
        <dbReference type="ChEBI" id="CHEBI:356416"/>
        <label>2</label>
    </ligand>
</feature>
<feature type="binding site" evidence="1">
    <location>
        <position position="313"/>
    </location>
    <ligand>
        <name>5-aminolevulinate</name>
        <dbReference type="ChEBI" id="CHEBI:356416"/>
        <label>2</label>
    </ligand>
</feature>
<name>HEM2_STAES</name>
<sequence length="324" mass="36570">MKFDRHRRLRSSKTMRDLVRETHVRKEDLIYPIFVVEQDDIKSEIKSLPGIYQISLNLLHEEIKEAYDLGIRAIMFFGVPNDKDDIGSGAYDHNGVVQEATRISKNLYKDLLIVADTCLCEYTDHGHCGVIDDHTHDVDNDKSLPLLVKTAISQVEAGADIIAPSNMMDGFVAEIREGLDQAGYQNIPIMSYGIKYASSFFGPFRDAADSAPSFGDRKTYQMDPANRLEALRELESDLKEGCDMMIVKPSLSYLDIIRDVKNNTNVPVVAYNVSGEYSMTKAAALNGWIDEEKIVMEQMISMKRAGADLIITYFAKDICRYLDK</sequence>
<reference key="1">
    <citation type="journal article" date="2003" name="Mol. Microbiol.">
        <title>Genome-based analysis of virulence genes in a non-biofilm-forming Staphylococcus epidermidis strain (ATCC 12228).</title>
        <authorList>
            <person name="Zhang Y.-Q."/>
            <person name="Ren S.-X."/>
            <person name="Li H.-L."/>
            <person name="Wang Y.-X."/>
            <person name="Fu G."/>
            <person name="Yang J."/>
            <person name="Qin Z.-Q."/>
            <person name="Miao Y.-G."/>
            <person name="Wang W.-Y."/>
            <person name="Chen R.-S."/>
            <person name="Shen Y."/>
            <person name="Chen Z."/>
            <person name="Yuan Z.-H."/>
            <person name="Zhao G.-P."/>
            <person name="Qu D."/>
            <person name="Danchin A."/>
            <person name="Wen Y.-M."/>
        </authorList>
    </citation>
    <scope>NUCLEOTIDE SEQUENCE [LARGE SCALE GENOMIC DNA]</scope>
    <source>
        <strain>ATCC 12228 / FDA PCI 1200</strain>
    </source>
</reference>
<keyword id="KW-0350">Heme biosynthesis</keyword>
<keyword id="KW-0456">Lyase</keyword>
<keyword id="KW-0460">Magnesium</keyword>
<keyword id="KW-0479">Metal-binding</keyword>
<keyword id="KW-0627">Porphyrin biosynthesis</keyword>
<keyword id="KW-0862">Zinc</keyword>
<evidence type="ECO:0000250" key="1"/>
<evidence type="ECO:0000305" key="2"/>
<accession>Q8CNZ0</accession>
<organism>
    <name type="scientific">Staphylococcus epidermidis (strain ATCC 12228 / FDA PCI 1200)</name>
    <dbReference type="NCBI Taxonomy" id="176280"/>
    <lineage>
        <taxon>Bacteria</taxon>
        <taxon>Bacillati</taxon>
        <taxon>Bacillota</taxon>
        <taxon>Bacilli</taxon>
        <taxon>Bacillales</taxon>
        <taxon>Staphylococcaceae</taxon>
        <taxon>Staphylococcus</taxon>
    </lineage>
</organism>
<gene>
    <name type="primary">hemB</name>
    <name type="ordered locus">SE_1343</name>
</gene>
<comment type="function">
    <text evidence="1">Catalyzes an early step in the biosynthesis of tetrapyrroles. Binds two molecules of 5-aminolevulinate per subunit, each at a distinct site, and catalyzes their condensation to form porphobilinogen (By similarity).</text>
</comment>
<comment type="catalytic activity">
    <reaction>
        <text>2 5-aminolevulinate = porphobilinogen + 2 H2O + H(+)</text>
        <dbReference type="Rhea" id="RHEA:24064"/>
        <dbReference type="ChEBI" id="CHEBI:15377"/>
        <dbReference type="ChEBI" id="CHEBI:15378"/>
        <dbReference type="ChEBI" id="CHEBI:58126"/>
        <dbReference type="ChEBI" id="CHEBI:356416"/>
        <dbReference type="EC" id="4.2.1.24"/>
    </reaction>
</comment>
<comment type="cofactor">
    <cofactor evidence="1">
        <name>Zn(2+)</name>
        <dbReference type="ChEBI" id="CHEBI:29105"/>
    </cofactor>
    <text evidence="1">Binds 1 zinc ion per monomer.</text>
</comment>
<comment type="pathway">
    <text>Porphyrin-containing compound metabolism; protoporphyrin-IX biosynthesis; coproporphyrinogen-III from 5-aminolevulinate: step 1/4.</text>
</comment>
<comment type="subunit">
    <text evidence="1">Homooctamer.</text>
</comment>
<comment type="similarity">
    <text evidence="2">Belongs to the ALAD family.</text>
</comment>